<protein>
    <recommendedName>
        <fullName evidence="1">Protein GrpE</fullName>
    </recommendedName>
    <alternativeName>
        <fullName evidence="1">HSP-70 cofactor</fullName>
    </alternativeName>
</protein>
<organism>
    <name type="scientific">Methylobacterium nodulans (strain LMG 21967 / CNCM I-2342 / ORS 2060)</name>
    <dbReference type="NCBI Taxonomy" id="460265"/>
    <lineage>
        <taxon>Bacteria</taxon>
        <taxon>Pseudomonadati</taxon>
        <taxon>Pseudomonadota</taxon>
        <taxon>Alphaproteobacteria</taxon>
        <taxon>Hyphomicrobiales</taxon>
        <taxon>Methylobacteriaceae</taxon>
        <taxon>Methylobacterium</taxon>
    </lineage>
</organism>
<accession>B8IJD7</accession>
<evidence type="ECO:0000255" key="1">
    <source>
        <dbReference type="HAMAP-Rule" id="MF_01151"/>
    </source>
</evidence>
<evidence type="ECO:0000256" key="2">
    <source>
        <dbReference type="SAM" id="MobiDB-lite"/>
    </source>
</evidence>
<comment type="function">
    <text evidence="1">Participates actively in the response to hyperosmotic and heat shock by preventing the aggregation of stress-denatured proteins, in association with DnaK and GrpE. It is the nucleotide exchange factor for DnaK and may function as a thermosensor. Unfolded proteins bind initially to DnaJ; upon interaction with the DnaJ-bound protein, DnaK hydrolyzes its bound ATP, resulting in the formation of a stable complex. GrpE releases ADP from DnaK; ATP binding to DnaK triggers the release of the substrate protein, thus completing the reaction cycle. Several rounds of ATP-dependent interactions between DnaJ, DnaK and GrpE are required for fully efficient folding.</text>
</comment>
<comment type="subunit">
    <text evidence="1">Homodimer.</text>
</comment>
<comment type="subcellular location">
    <subcellularLocation>
        <location evidence="1">Cytoplasm</location>
    </subcellularLocation>
</comment>
<comment type="similarity">
    <text evidence="1">Belongs to the GrpE family.</text>
</comment>
<proteinExistence type="inferred from homology"/>
<feature type="chain" id="PRO_1000164202" description="Protein GrpE">
    <location>
        <begin position="1"/>
        <end position="226"/>
    </location>
</feature>
<feature type="region of interest" description="Disordered" evidence="2">
    <location>
        <begin position="1"/>
        <end position="31"/>
    </location>
</feature>
<feature type="region of interest" description="Disordered" evidence="2">
    <location>
        <begin position="189"/>
        <end position="226"/>
    </location>
</feature>
<feature type="compositionally biased region" description="Low complexity" evidence="2">
    <location>
        <begin position="192"/>
        <end position="218"/>
    </location>
</feature>
<dbReference type="EMBL" id="CP001349">
    <property type="protein sequence ID" value="ACL56152.1"/>
    <property type="molecule type" value="Genomic_DNA"/>
</dbReference>
<dbReference type="RefSeq" id="WP_015927850.1">
    <property type="nucleotide sequence ID" value="NC_011894.1"/>
</dbReference>
<dbReference type="SMR" id="B8IJD7"/>
<dbReference type="STRING" id="460265.Mnod_1146"/>
<dbReference type="KEGG" id="mno:Mnod_1146"/>
<dbReference type="eggNOG" id="COG0576">
    <property type="taxonomic scope" value="Bacteria"/>
</dbReference>
<dbReference type="HOGENOM" id="CLU_057217_6_2_5"/>
<dbReference type="OrthoDB" id="9789811at2"/>
<dbReference type="Proteomes" id="UP000008207">
    <property type="component" value="Chromosome"/>
</dbReference>
<dbReference type="GO" id="GO:0005737">
    <property type="term" value="C:cytoplasm"/>
    <property type="evidence" value="ECO:0007669"/>
    <property type="project" value="UniProtKB-SubCell"/>
</dbReference>
<dbReference type="GO" id="GO:0000774">
    <property type="term" value="F:adenyl-nucleotide exchange factor activity"/>
    <property type="evidence" value="ECO:0007669"/>
    <property type="project" value="InterPro"/>
</dbReference>
<dbReference type="GO" id="GO:0042803">
    <property type="term" value="F:protein homodimerization activity"/>
    <property type="evidence" value="ECO:0007669"/>
    <property type="project" value="InterPro"/>
</dbReference>
<dbReference type="GO" id="GO:0051087">
    <property type="term" value="F:protein-folding chaperone binding"/>
    <property type="evidence" value="ECO:0007669"/>
    <property type="project" value="InterPro"/>
</dbReference>
<dbReference type="GO" id="GO:0051082">
    <property type="term" value="F:unfolded protein binding"/>
    <property type="evidence" value="ECO:0007669"/>
    <property type="project" value="TreeGrafter"/>
</dbReference>
<dbReference type="GO" id="GO:0006457">
    <property type="term" value="P:protein folding"/>
    <property type="evidence" value="ECO:0007669"/>
    <property type="project" value="InterPro"/>
</dbReference>
<dbReference type="CDD" id="cd00446">
    <property type="entry name" value="GrpE"/>
    <property type="match status" value="1"/>
</dbReference>
<dbReference type="FunFam" id="2.30.22.10:FF:000001">
    <property type="entry name" value="Protein GrpE"/>
    <property type="match status" value="1"/>
</dbReference>
<dbReference type="Gene3D" id="3.90.20.20">
    <property type="match status" value="1"/>
</dbReference>
<dbReference type="Gene3D" id="2.30.22.10">
    <property type="entry name" value="Head domain of nucleotide exchange factor GrpE"/>
    <property type="match status" value="1"/>
</dbReference>
<dbReference type="HAMAP" id="MF_01151">
    <property type="entry name" value="GrpE"/>
    <property type="match status" value="1"/>
</dbReference>
<dbReference type="InterPro" id="IPR000740">
    <property type="entry name" value="GrpE"/>
</dbReference>
<dbReference type="InterPro" id="IPR013805">
    <property type="entry name" value="GrpE_coiled_coil"/>
</dbReference>
<dbReference type="InterPro" id="IPR009012">
    <property type="entry name" value="GrpE_head"/>
</dbReference>
<dbReference type="NCBIfam" id="NF010738">
    <property type="entry name" value="PRK14140.1"/>
    <property type="match status" value="1"/>
</dbReference>
<dbReference type="NCBIfam" id="NF010739">
    <property type="entry name" value="PRK14141.1"/>
    <property type="match status" value="1"/>
</dbReference>
<dbReference type="PANTHER" id="PTHR21237">
    <property type="entry name" value="GRPE PROTEIN"/>
    <property type="match status" value="1"/>
</dbReference>
<dbReference type="PANTHER" id="PTHR21237:SF23">
    <property type="entry name" value="GRPE PROTEIN HOMOLOG, MITOCHONDRIAL"/>
    <property type="match status" value="1"/>
</dbReference>
<dbReference type="Pfam" id="PF01025">
    <property type="entry name" value="GrpE"/>
    <property type="match status" value="1"/>
</dbReference>
<dbReference type="PRINTS" id="PR00773">
    <property type="entry name" value="GRPEPROTEIN"/>
</dbReference>
<dbReference type="SUPFAM" id="SSF58014">
    <property type="entry name" value="Coiled-coil domain of nucleotide exchange factor GrpE"/>
    <property type="match status" value="1"/>
</dbReference>
<dbReference type="SUPFAM" id="SSF51064">
    <property type="entry name" value="Head domain of nucleotide exchange factor GrpE"/>
    <property type="match status" value="1"/>
</dbReference>
<dbReference type="PROSITE" id="PS01071">
    <property type="entry name" value="GRPE"/>
    <property type="match status" value="1"/>
</dbReference>
<keyword id="KW-0143">Chaperone</keyword>
<keyword id="KW-0963">Cytoplasm</keyword>
<keyword id="KW-1185">Reference proteome</keyword>
<keyword id="KW-0346">Stress response</keyword>
<sequence length="226" mass="23685">MTPNDTENAARPLPEGAVDPAQDAAGAPDTLAPAAQADAVAALEAEKLDLKNKLLRALADMENLRRRTEREVADARTYAVTNFARDMLNVADNVRRALDSVPVEDRAAADGALKALLDGIELTGRDLAKTLERHGVRAVEPQGQRFDPNLHQAMFEVPNPDVANGTVVQVVQTGYVIGDRVLRPALVGVSKGGPKAAEASKPAGEAPKPAGEAPKPAGDGQKPAEA</sequence>
<gene>
    <name evidence="1" type="primary">grpE</name>
    <name type="ordered locus">Mnod_1146</name>
</gene>
<reference key="1">
    <citation type="submission" date="2009-01" db="EMBL/GenBank/DDBJ databases">
        <title>Complete sequence of chromosome of Methylobacterium nodulans ORS 2060.</title>
        <authorList>
            <consortium name="US DOE Joint Genome Institute"/>
            <person name="Lucas S."/>
            <person name="Copeland A."/>
            <person name="Lapidus A."/>
            <person name="Glavina del Rio T."/>
            <person name="Dalin E."/>
            <person name="Tice H."/>
            <person name="Bruce D."/>
            <person name="Goodwin L."/>
            <person name="Pitluck S."/>
            <person name="Sims D."/>
            <person name="Brettin T."/>
            <person name="Detter J.C."/>
            <person name="Han C."/>
            <person name="Larimer F."/>
            <person name="Land M."/>
            <person name="Hauser L."/>
            <person name="Kyrpides N."/>
            <person name="Ivanova N."/>
            <person name="Marx C.J."/>
            <person name="Richardson P."/>
        </authorList>
    </citation>
    <scope>NUCLEOTIDE SEQUENCE [LARGE SCALE GENOMIC DNA]</scope>
    <source>
        <strain>LMG 21967 / CNCM I-2342 / ORS 2060</strain>
    </source>
</reference>
<name>GRPE_METNO</name>